<evidence type="ECO:0000255" key="1">
    <source>
        <dbReference type="HAMAP-Rule" id="MF_00303"/>
    </source>
</evidence>
<evidence type="ECO:0000256" key="2">
    <source>
        <dbReference type="SAM" id="MobiDB-lite"/>
    </source>
</evidence>
<protein>
    <recommendedName>
        <fullName evidence="1">Trigger factor</fullName>
        <shortName evidence="1">TF</shortName>
        <ecNumber evidence="1">5.2.1.8</ecNumber>
    </recommendedName>
    <alternativeName>
        <fullName evidence="1">PPIase</fullName>
    </alternativeName>
</protein>
<proteinExistence type="inferred from homology"/>
<dbReference type="EC" id="5.2.1.8" evidence="1"/>
<dbReference type="EMBL" id="CP000084">
    <property type="protein sequence ID" value="AAZ21694.1"/>
    <property type="molecule type" value="Genomic_DNA"/>
</dbReference>
<dbReference type="RefSeq" id="WP_011282010.1">
    <property type="nucleotide sequence ID" value="NC_007205.1"/>
</dbReference>
<dbReference type="SMR" id="Q4FM95"/>
<dbReference type="STRING" id="335992.SAR11_0879"/>
<dbReference type="GeneID" id="66295372"/>
<dbReference type="KEGG" id="pub:SAR11_0879"/>
<dbReference type="eggNOG" id="COG0544">
    <property type="taxonomic scope" value="Bacteria"/>
</dbReference>
<dbReference type="HOGENOM" id="CLU_033058_2_2_5"/>
<dbReference type="OrthoDB" id="9767721at2"/>
<dbReference type="Proteomes" id="UP000002528">
    <property type="component" value="Chromosome"/>
</dbReference>
<dbReference type="GO" id="GO:0005737">
    <property type="term" value="C:cytoplasm"/>
    <property type="evidence" value="ECO:0007669"/>
    <property type="project" value="UniProtKB-SubCell"/>
</dbReference>
<dbReference type="GO" id="GO:0003755">
    <property type="term" value="F:peptidyl-prolyl cis-trans isomerase activity"/>
    <property type="evidence" value="ECO:0007669"/>
    <property type="project" value="UniProtKB-UniRule"/>
</dbReference>
<dbReference type="GO" id="GO:0044183">
    <property type="term" value="F:protein folding chaperone"/>
    <property type="evidence" value="ECO:0007669"/>
    <property type="project" value="TreeGrafter"/>
</dbReference>
<dbReference type="GO" id="GO:0043022">
    <property type="term" value="F:ribosome binding"/>
    <property type="evidence" value="ECO:0007669"/>
    <property type="project" value="TreeGrafter"/>
</dbReference>
<dbReference type="GO" id="GO:0051083">
    <property type="term" value="P:'de novo' cotranslational protein folding"/>
    <property type="evidence" value="ECO:0007669"/>
    <property type="project" value="TreeGrafter"/>
</dbReference>
<dbReference type="GO" id="GO:0051301">
    <property type="term" value="P:cell division"/>
    <property type="evidence" value="ECO:0007669"/>
    <property type="project" value="UniProtKB-KW"/>
</dbReference>
<dbReference type="GO" id="GO:0061077">
    <property type="term" value="P:chaperone-mediated protein folding"/>
    <property type="evidence" value="ECO:0007669"/>
    <property type="project" value="TreeGrafter"/>
</dbReference>
<dbReference type="GO" id="GO:0015031">
    <property type="term" value="P:protein transport"/>
    <property type="evidence" value="ECO:0007669"/>
    <property type="project" value="UniProtKB-UniRule"/>
</dbReference>
<dbReference type="GO" id="GO:0043335">
    <property type="term" value="P:protein unfolding"/>
    <property type="evidence" value="ECO:0007669"/>
    <property type="project" value="TreeGrafter"/>
</dbReference>
<dbReference type="Gene3D" id="3.10.50.40">
    <property type="match status" value="1"/>
</dbReference>
<dbReference type="Gene3D" id="3.30.70.1050">
    <property type="entry name" value="Trigger factor ribosome-binding domain"/>
    <property type="match status" value="1"/>
</dbReference>
<dbReference type="Gene3D" id="1.10.3120.10">
    <property type="entry name" value="Trigger factor, C-terminal domain"/>
    <property type="match status" value="1"/>
</dbReference>
<dbReference type="HAMAP" id="MF_00303">
    <property type="entry name" value="Trigger_factor_Tig"/>
    <property type="match status" value="1"/>
</dbReference>
<dbReference type="InterPro" id="IPR046357">
    <property type="entry name" value="PPIase_dom_sf"/>
</dbReference>
<dbReference type="InterPro" id="IPR001179">
    <property type="entry name" value="PPIase_FKBP_dom"/>
</dbReference>
<dbReference type="InterPro" id="IPR005215">
    <property type="entry name" value="Trig_fac"/>
</dbReference>
<dbReference type="InterPro" id="IPR008880">
    <property type="entry name" value="Trigger_fac_C"/>
</dbReference>
<dbReference type="InterPro" id="IPR037041">
    <property type="entry name" value="Trigger_fac_C_sf"/>
</dbReference>
<dbReference type="InterPro" id="IPR008881">
    <property type="entry name" value="Trigger_fac_ribosome-bd_bac"/>
</dbReference>
<dbReference type="InterPro" id="IPR036611">
    <property type="entry name" value="Trigger_fac_ribosome-bd_sf"/>
</dbReference>
<dbReference type="InterPro" id="IPR027304">
    <property type="entry name" value="Trigger_fact/SurA_dom_sf"/>
</dbReference>
<dbReference type="NCBIfam" id="TIGR00115">
    <property type="entry name" value="tig"/>
    <property type="match status" value="1"/>
</dbReference>
<dbReference type="PANTHER" id="PTHR30560">
    <property type="entry name" value="TRIGGER FACTOR CHAPERONE AND PEPTIDYL-PROLYL CIS/TRANS ISOMERASE"/>
    <property type="match status" value="1"/>
</dbReference>
<dbReference type="PANTHER" id="PTHR30560:SF3">
    <property type="entry name" value="TRIGGER FACTOR-LIKE PROTEIN TIG, CHLOROPLASTIC"/>
    <property type="match status" value="1"/>
</dbReference>
<dbReference type="Pfam" id="PF00254">
    <property type="entry name" value="FKBP_C"/>
    <property type="match status" value="1"/>
</dbReference>
<dbReference type="Pfam" id="PF05698">
    <property type="entry name" value="Trigger_C"/>
    <property type="match status" value="1"/>
</dbReference>
<dbReference type="Pfam" id="PF05697">
    <property type="entry name" value="Trigger_N"/>
    <property type="match status" value="1"/>
</dbReference>
<dbReference type="PIRSF" id="PIRSF003095">
    <property type="entry name" value="Trigger_factor"/>
    <property type="match status" value="1"/>
</dbReference>
<dbReference type="SUPFAM" id="SSF54534">
    <property type="entry name" value="FKBP-like"/>
    <property type="match status" value="1"/>
</dbReference>
<dbReference type="SUPFAM" id="SSF109998">
    <property type="entry name" value="Triger factor/SurA peptide-binding domain-like"/>
    <property type="match status" value="1"/>
</dbReference>
<dbReference type="SUPFAM" id="SSF102735">
    <property type="entry name" value="Trigger factor ribosome-binding domain"/>
    <property type="match status" value="1"/>
</dbReference>
<sequence length="477" mass="54804">MKVTVENKKGLNKDIKVFIDKETMNSYMDEKYEEIKKTVNLKGFRPGKVPKEVLKRQFGQAIFSEVLDKVLKDTSVKALEDNKIKPAGQPKLDLKTYGEDKDLEYVMSITELPKVELKSVENIKFDEYSVKIDTNETDKRIKEIAKSQNNFKEVAADVRAVEENLVIFDYKATIDGKDFTGGEGKNTQLILGKDLFIKGFDKQLIGVKKNDEKSVDVTLPENYPQKEYANKKANFICKITEVKKSEEVKIDDVFAKNLGAKDLADLKVLVSKQINDEYKNSLDKLAKTQILKEIENFKVDEIPENLIEEEVKILSQGMTEEDSKKSRKNFEEIAKKRIKVGLILNEFGEQNKIKVTEQEVQAEVQKQLRMMPGQEKMVMEFYQKNPSALASLRGTVYEEKIIDLIKTKAKPSKKEISKEEAEKILKEHQKQDHNHEHDHNHDHDHPEEKKASKSTKIEKKPKPSASKKPSTKKVSKK</sequence>
<gene>
    <name evidence="1" type="primary">tig</name>
    <name type="ordered locus">SAR11_0879</name>
</gene>
<name>TIG_PELUB</name>
<organism>
    <name type="scientific">Pelagibacter ubique (strain HTCC1062)</name>
    <dbReference type="NCBI Taxonomy" id="335992"/>
    <lineage>
        <taxon>Bacteria</taxon>
        <taxon>Pseudomonadati</taxon>
        <taxon>Pseudomonadota</taxon>
        <taxon>Alphaproteobacteria</taxon>
        <taxon>Candidatus Pelagibacterales</taxon>
        <taxon>Candidatus Pelagibacteraceae</taxon>
        <taxon>Candidatus Pelagibacter</taxon>
    </lineage>
</organism>
<feature type="chain" id="PRO_0000256585" description="Trigger factor">
    <location>
        <begin position="1"/>
        <end position="477"/>
    </location>
</feature>
<feature type="domain" description="PPIase FKBP-type" evidence="1">
    <location>
        <begin position="163"/>
        <end position="248"/>
    </location>
</feature>
<feature type="region of interest" description="Disordered" evidence="2">
    <location>
        <begin position="408"/>
        <end position="477"/>
    </location>
</feature>
<feature type="compositionally biased region" description="Basic and acidic residues" evidence="2">
    <location>
        <begin position="408"/>
        <end position="461"/>
    </location>
</feature>
<keyword id="KW-0131">Cell cycle</keyword>
<keyword id="KW-0132">Cell division</keyword>
<keyword id="KW-0143">Chaperone</keyword>
<keyword id="KW-0963">Cytoplasm</keyword>
<keyword id="KW-0413">Isomerase</keyword>
<keyword id="KW-1185">Reference proteome</keyword>
<keyword id="KW-0697">Rotamase</keyword>
<reference key="1">
    <citation type="journal article" date="2005" name="Science">
        <title>Genome streamlining in a cosmopolitan oceanic bacterium.</title>
        <authorList>
            <person name="Giovannoni S.J."/>
            <person name="Tripp H.J."/>
            <person name="Givan S."/>
            <person name="Podar M."/>
            <person name="Vergin K.L."/>
            <person name="Baptista D."/>
            <person name="Bibbs L."/>
            <person name="Eads J."/>
            <person name="Richardson T.H."/>
            <person name="Noordewier M."/>
            <person name="Rappe M.S."/>
            <person name="Short J.M."/>
            <person name="Carrington J.C."/>
            <person name="Mathur E.J."/>
        </authorList>
    </citation>
    <scope>NUCLEOTIDE SEQUENCE [LARGE SCALE GENOMIC DNA]</scope>
    <source>
        <strain>HTCC1062</strain>
    </source>
</reference>
<comment type="function">
    <text evidence="1">Involved in protein export. Acts as a chaperone by maintaining the newly synthesized protein in an open conformation. Functions as a peptidyl-prolyl cis-trans isomerase.</text>
</comment>
<comment type="catalytic activity">
    <reaction evidence="1">
        <text>[protein]-peptidylproline (omega=180) = [protein]-peptidylproline (omega=0)</text>
        <dbReference type="Rhea" id="RHEA:16237"/>
        <dbReference type="Rhea" id="RHEA-COMP:10747"/>
        <dbReference type="Rhea" id="RHEA-COMP:10748"/>
        <dbReference type="ChEBI" id="CHEBI:83833"/>
        <dbReference type="ChEBI" id="CHEBI:83834"/>
        <dbReference type="EC" id="5.2.1.8"/>
    </reaction>
</comment>
<comment type="subcellular location">
    <subcellularLocation>
        <location>Cytoplasm</location>
    </subcellularLocation>
    <text evidence="1">About half TF is bound to the ribosome near the polypeptide exit tunnel while the other half is free in the cytoplasm.</text>
</comment>
<comment type="domain">
    <text evidence="1">Consists of 3 domains; the N-terminus binds the ribosome, the middle domain has PPIase activity, while the C-terminus has intrinsic chaperone activity on its own.</text>
</comment>
<comment type="similarity">
    <text evidence="1">Belongs to the FKBP-type PPIase family. Tig subfamily.</text>
</comment>
<accession>Q4FM95</accession>